<dbReference type="EMBL" id="BA000021">
    <property type="protein sequence ID" value="BAC24622.1"/>
    <property type="molecule type" value="Genomic_DNA"/>
</dbReference>
<dbReference type="SMR" id="Q8D278"/>
<dbReference type="STRING" id="36870.gene:10368980"/>
<dbReference type="KEGG" id="wbr:rpmA"/>
<dbReference type="eggNOG" id="COG0211">
    <property type="taxonomic scope" value="Bacteria"/>
</dbReference>
<dbReference type="HOGENOM" id="CLU_095424_4_1_6"/>
<dbReference type="OrthoDB" id="9803474at2"/>
<dbReference type="Proteomes" id="UP000000562">
    <property type="component" value="Chromosome"/>
</dbReference>
<dbReference type="GO" id="GO:0022625">
    <property type="term" value="C:cytosolic large ribosomal subunit"/>
    <property type="evidence" value="ECO:0007669"/>
    <property type="project" value="TreeGrafter"/>
</dbReference>
<dbReference type="GO" id="GO:0003735">
    <property type="term" value="F:structural constituent of ribosome"/>
    <property type="evidence" value="ECO:0007669"/>
    <property type="project" value="InterPro"/>
</dbReference>
<dbReference type="GO" id="GO:0006412">
    <property type="term" value="P:translation"/>
    <property type="evidence" value="ECO:0007669"/>
    <property type="project" value="UniProtKB-UniRule"/>
</dbReference>
<dbReference type="FunFam" id="2.40.50.100:FF:000020">
    <property type="entry name" value="50S ribosomal protein L27"/>
    <property type="match status" value="1"/>
</dbReference>
<dbReference type="Gene3D" id="2.40.50.100">
    <property type="match status" value="1"/>
</dbReference>
<dbReference type="HAMAP" id="MF_00539">
    <property type="entry name" value="Ribosomal_bL27"/>
    <property type="match status" value="1"/>
</dbReference>
<dbReference type="InterPro" id="IPR001684">
    <property type="entry name" value="Ribosomal_bL27"/>
</dbReference>
<dbReference type="InterPro" id="IPR018261">
    <property type="entry name" value="Ribosomal_bL27_CS"/>
</dbReference>
<dbReference type="NCBIfam" id="TIGR00062">
    <property type="entry name" value="L27"/>
    <property type="match status" value="1"/>
</dbReference>
<dbReference type="PANTHER" id="PTHR15893:SF0">
    <property type="entry name" value="LARGE RIBOSOMAL SUBUNIT PROTEIN BL27M"/>
    <property type="match status" value="1"/>
</dbReference>
<dbReference type="PANTHER" id="PTHR15893">
    <property type="entry name" value="RIBOSOMAL PROTEIN L27"/>
    <property type="match status" value="1"/>
</dbReference>
<dbReference type="Pfam" id="PF01016">
    <property type="entry name" value="Ribosomal_L27"/>
    <property type="match status" value="1"/>
</dbReference>
<dbReference type="PRINTS" id="PR00063">
    <property type="entry name" value="RIBOSOMALL27"/>
</dbReference>
<dbReference type="SUPFAM" id="SSF110324">
    <property type="entry name" value="Ribosomal L27 protein-like"/>
    <property type="match status" value="1"/>
</dbReference>
<dbReference type="PROSITE" id="PS00831">
    <property type="entry name" value="RIBOSOMAL_L27"/>
    <property type="match status" value="1"/>
</dbReference>
<comment type="similarity">
    <text evidence="1">Belongs to the bacterial ribosomal protein bL27 family.</text>
</comment>
<evidence type="ECO:0000255" key="1">
    <source>
        <dbReference type="HAMAP-Rule" id="MF_00539"/>
    </source>
</evidence>
<evidence type="ECO:0000305" key="2"/>
<protein>
    <recommendedName>
        <fullName evidence="1">Large ribosomal subunit protein bL27</fullName>
    </recommendedName>
    <alternativeName>
        <fullName evidence="2">50S ribosomal protein L27</fullName>
    </alternativeName>
</protein>
<organism>
    <name type="scientific">Wigglesworthia glossinidia brevipalpis</name>
    <dbReference type="NCBI Taxonomy" id="36870"/>
    <lineage>
        <taxon>Bacteria</taxon>
        <taxon>Pseudomonadati</taxon>
        <taxon>Pseudomonadota</taxon>
        <taxon>Gammaproteobacteria</taxon>
        <taxon>Enterobacterales</taxon>
        <taxon>Erwiniaceae</taxon>
        <taxon>Wigglesworthia</taxon>
    </lineage>
</organism>
<accession>Q8D278</accession>
<proteinExistence type="inferred from homology"/>
<gene>
    <name evidence="1" type="primary">rpmA</name>
    <name type="ordered locus">WIGBR4760</name>
</gene>
<name>RL27_WIGBR</name>
<sequence>MAHKKAGGSTRNGRDSIGKRLGVKLFGGQKAYPGNIIVRQRGTKFHPGKNVGCGKDYSLYALKSGIVFFKKKKNKKFINIIPKILCK</sequence>
<reference key="1">
    <citation type="journal article" date="2002" name="Nat. Genet.">
        <title>Genome sequence of the endocellular obligate symbiont of tsetse flies, Wigglesworthia glossinidia.</title>
        <authorList>
            <person name="Akman L."/>
            <person name="Yamashita A."/>
            <person name="Watanabe H."/>
            <person name="Oshima K."/>
            <person name="Shiba T."/>
            <person name="Hattori M."/>
            <person name="Aksoy S."/>
        </authorList>
    </citation>
    <scope>NUCLEOTIDE SEQUENCE [LARGE SCALE GENOMIC DNA]</scope>
</reference>
<keyword id="KW-1185">Reference proteome</keyword>
<keyword id="KW-0687">Ribonucleoprotein</keyword>
<keyword id="KW-0689">Ribosomal protein</keyword>
<feature type="chain" id="PRO_0000181206" description="Large ribosomal subunit protein bL27">
    <location>
        <begin position="1"/>
        <end position="87"/>
    </location>
</feature>